<name>RS20_KOSOT</name>
<reference key="1">
    <citation type="submission" date="2009-06" db="EMBL/GenBank/DDBJ databases">
        <title>Complete sequence of Thermotogales bacterium TBF 19.5.1.</title>
        <authorList>
            <consortium name="US DOE Joint Genome Institute"/>
            <person name="Lucas S."/>
            <person name="Copeland A."/>
            <person name="Lapidus A."/>
            <person name="Glavina del Rio T."/>
            <person name="Tice H."/>
            <person name="Bruce D."/>
            <person name="Goodwin L."/>
            <person name="Pitluck S."/>
            <person name="Chertkov O."/>
            <person name="Brettin T."/>
            <person name="Detter J.C."/>
            <person name="Han C."/>
            <person name="Schmutz J."/>
            <person name="Larimer F."/>
            <person name="Land M."/>
            <person name="Hauser L."/>
            <person name="Kyrpides N."/>
            <person name="Ovchinnikova G."/>
            <person name="Noll K."/>
        </authorList>
    </citation>
    <scope>NUCLEOTIDE SEQUENCE [LARGE SCALE GENOMIC DNA]</scope>
    <source>
        <strain>ATCC BAA-1733 / DSM 21960 / TBF 19.5.1</strain>
    </source>
</reference>
<dbReference type="EMBL" id="CP001634">
    <property type="protein sequence ID" value="ACR79011.1"/>
    <property type="molecule type" value="Genomic_DNA"/>
</dbReference>
<dbReference type="RefSeq" id="WP_012744798.1">
    <property type="nucleotide sequence ID" value="NC_012785.1"/>
</dbReference>
<dbReference type="SMR" id="C5CD67"/>
<dbReference type="STRING" id="521045.Kole_0286"/>
<dbReference type="KEGG" id="kol:Kole_0286"/>
<dbReference type="eggNOG" id="COG0268">
    <property type="taxonomic scope" value="Bacteria"/>
</dbReference>
<dbReference type="HOGENOM" id="CLU_160655_3_1_0"/>
<dbReference type="OrthoDB" id="9808392at2"/>
<dbReference type="Proteomes" id="UP000002382">
    <property type="component" value="Chromosome"/>
</dbReference>
<dbReference type="GO" id="GO:0005829">
    <property type="term" value="C:cytosol"/>
    <property type="evidence" value="ECO:0007669"/>
    <property type="project" value="TreeGrafter"/>
</dbReference>
<dbReference type="GO" id="GO:0015935">
    <property type="term" value="C:small ribosomal subunit"/>
    <property type="evidence" value="ECO:0007669"/>
    <property type="project" value="TreeGrafter"/>
</dbReference>
<dbReference type="GO" id="GO:0070181">
    <property type="term" value="F:small ribosomal subunit rRNA binding"/>
    <property type="evidence" value="ECO:0007669"/>
    <property type="project" value="TreeGrafter"/>
</dbReference>
<dbReference type="GO" id="GO:0003735">
    <property type="term" value="F:structural constituent of ribosome"/>
    <property type="evidence" value="ECO:0007669"/>
    <property type="project" value="InterPro"/>
</dbReference>
<dbReference type="GO" id="GO:0006412">
    <property type="term" value="P:translation"/>
    <property type="evidence" value="ECO:0007669"/>
    <property type="project" value="UniProtKB-UniRule"/>
</dbReference>
<dbReference type="FunFam" id="1.20.58.110:FF:000001">
    <property type="entry name" value="30S ribosomal protein S20"/>
    <property type="match status" value="1"/>
</dbReference>
<dbReference type="Gene3D" id="1.20.58.110">
    <property type="entry name" value="Ribosomal protein S20"/>
    <property type="match status" value="1"/>
</dbReference>
<dbReference type="HAMAP" id="MF_00500">
    <property type="entry name" value="Ribosomal_bS20"/>
    <property type="match status" value="1"/>
</dbReference>
<dbReference type="InterPro" id="IPR002583">
    <property type="entry name" value="Ribosomal_bS20"/>
</dbReference>
<dbReference type="InterPro" id="IPR036510">
    <property type="entry name" value="Ribosomal_bS20_sf"/>
</dbReference>
<dbReference type="NCBIfam" id="TIGR00029">
    <property type="entry name" value="S20"/>
    <property type="match status" value="1"/>
</dbReference>
<dbReference type="PANTHER" id="PTHR33398">
    <property type="entry name" value="30S RIBOSOMAL PROTEIN S20"/>
    <property type="match status" value="1"/>
</dbReference>
<dbReference type="PANTHER" id="PTHR33398:SF1">
    <property type="entry name" value="SMALL RIBOSOMAL SUBUNIT PROTEIN BS20C"/>
    <property type="match status" value="1"/>
</dbReference>
<dbReference type="Pfam" id="PF01649">
    <property type="entry name" value="Ribosomal_S20p"/>
    <property type="match status" value="1"/>
</dbReference>
<dbReference type="SUPFAM" id="SSF46992">
    <property type="entry name" value="Ribosomal protein S20"/>
    <property type="match status" value="1"/>
</dbReference>
<protein>
    <recommendedName>
        <fullName evidence="1">Small ribosomal subunit protein bS20</fullName>
    </recommendedName>
    <alternativeName>
        <fullName evidence="2">30S ribosomal protein S20</fullName>
    </alternativeName>
</protein>
<gene>
    <name evidence="1" type="primary">rpsT</name>
    <name type="ordered locus">Kole_0286</name>
</gene>
<feature type="chain" id="PRO_1000206503" description="Small ribosomal subunit protein bS20">
    <location>
        <begin position="1"/>
        <end position="98"/>
    </location>
</feature>
<proteinExistence type="inferred from homology"/>
<accession>C5CD67</accession>
<evidence type="ECO:0000255" key="1">
    <source>
        <dbReference type="HAMAP-Rule" id="MF_00500"/>
    </source>
</evidence>
<evidence type="ECO:0000305" key="2"/>
<keyword id="KW-1185">Reference proteome</keyword>
<keyword id="KW-0687">Ribonucleoprotein</keyword>
<keyword id="KW-0689">Ribosomal protein</keyword>
<keyword id="KW-0694">RNA-binding</keyword>
<keyword id="KW-0699">rRNA-binding</keyword>
<sequence length="98" mass="11269">MPNIKSAAKRVRQNKVRRLRNKSVRTRFRNVTKQLLKAIEINEEPEKVNELLRLSYSVLDKAAKKGVIHKRQASRRKSRLTAKVKAYLEARSAGSAQS</sequence>
<organism>
    <name type="scientific">Kosmotoga olearia (strain ATCC BAA-1733 / DSM 21960 / TBF 19.5.1)</name>
    <dbReference type="NCBI Taxonomy" id="521045"/>
    <lineage>
        <taxon>Bacteria</taxon>
        <taxon>Thermotogati</taxon>
        <taxon>Thermotogota</taxon>
        <taxon>Thermotogae</taxon>
        <taxon>Kosmotogales</taxon>
        <taxon>Kosmotogaceae</taxon>
        <taxon>Kosmotoga</taxon>
    </lineage>
</organism>
<comment type="function">
    <text evidence="1">Binds directly to 16S ribosomal RNA.</text>
</comment>
<comment type="similarity">
    <text evidence="1">Belongs to the bacterial ribosomal protein bS20 family.</text>
</comment>